<comment type="function">
    <text evidence="1">The RuvA-RuvB-RuvC complex processes Holliday junction (HJ) DNA during genetic recombination and DNA repair, while the RuvA-RuvB complex plays an important role in the rescue of blocked DNA replication forks via replication fork reversal (RFR). RuvA specifically binds to HJ cruciform DNA, conferring on it an open structure. The RuvB hexamer acts as an ATP-dependent pump, pulling dsDNA into and through the RuvAB complex. HJ branch migration allows RuvC to scan DNA until it finds its consensus sequence, where it cleaves and resolves the cruciform DNA.</text>
</comment>
<comment type="subunit">
    <text evidence="1">Homotetramer. Forms an RuvA(8)-RuvB(12)-Holliday junction (HJ) complex. HJ DNA is sandwiched between 2 RuvA tetramers; dsDNA enters through RuvA and exits via RuvB. An RuvB hexamer assembles on each DNA strand where it exits the tetramer. Each RuvB hexamer is contacted by two RuvA subunits (via domain III) on 2 adjacent RuvB subunits; this complex drives branch migration. In the full resolvosome a probable DNA-RuvA(4)-RuvB(12)-RuvC(2) complex forms which resolves the HJ.</text>
</comment>
<comment type="subcellular location">
    <subcellularLocation>
        <location evidence="1">Cytoplasm</location>
    </subcellularLocation>
</comment>
<comment type="domain">
    <text evidence="1">Has three domains with a flexible linker between the domains II and III and assumes an 'L' shape. Domain III is highly mobile and contacts RuvB.</text>
</comment>
<comment type="similarity">
    <text evidence="1">Belongs to the RuvA family.</text>
</comment>
<reference key="1">
    <citation type="submission" date="2006-05" db="EMBL/GenBank/DDBJ databases">
        <authorList>
            <consortium name="Genoscope"/>
        </authorList>
    </citation>
    <scope>NUCLEOTIDE SEQUENCE [LARGE SCALE GENOMIC DNA]</scope>
    <source>
        <strain>WH7803</strain>
    </source>
</reference>
<evidence type="ECO:0000255" key="1">
    <source>
        <dbReference type="HAMAP-Rule" id="MF_00031"/>
    </source>
</evidence>
<proteinExistence type="inferred from homology"/>
<name>RUVA_SYNPW</name>
<sequence>MIGWLQGERIQSWEQGGRRGVVVACGGVGYEVQLTSRDQNGQGTGSACTLWVHQVQRDDGSTLFGFCDQQERDLFRTLIGVNGVGPQMALALLDCCRVHELVAAIVDGDLKRLTQAQGVGKRTAERIAVELRDRLGNWAPLQEPSLSLVDRSDVKAIPLGEPCLRDLQITLETLGYEDLEIRRAMRAVASGPDVPAEDDGDAWLRASLKWLSQSA</sequence>
<protein>
    <recommendedName>
        <fullName evidence="1">Holliday junction branch migration complex subunit RuvA</fullName>
    </recommendedName>
</protein>
<gene>
    <name evidence="1" type="primary">ruvA</name>
    <name type="ordered locus">SynWH7803_1070</name>
</gene>
<organism>
    <name type="scientific">Synechococcus sp. (strain WH7803)</name>
    <dbReference type="NCBI Taxonomy" id="32051"/>
    <lineage>
        <taxon>Bacteria</taxon>
        <taxon>Bacillati</taxon>
        <taxon>Cyanobacteriota</taxon>
        <taxon>Cyanophyceae</taxon>
        <taxon>Synechococcales</taxon>
        <taxon>Synechococcaceae</taxon>
        <taxon>Synechococcus</taxon>
    </lineage>
</organism>
<accession>A5GKN1</accession>
<keyword id="KW-0963">Cytoplasm</keyword>
<keyword id="KW-0227">DNA damage</keyword>
<keyword id="KW-0233">DNA recombination</keyword>
<keyword id="KW-0234">DNA repair</keyword>
<keyword id="KW-0238">DNA-binding</keyword>
<keyword id="KW-1185">Reference proteome</keyword>
<feature type="chain" id="PRO_1000002582" description="Holliday junction branch migration complex subunit RuvA">
    <location>
        <begin position="1"/>
        <end position="215"/>
    </location>
</feature>
<feature type="region of interest" description="Domain I" evidence="1">
    <location>
        <begin position="1"/>
        <end position="67"/>
    </location>
</feature>
<feature type="region of interest" description="Domain II" evidence="1">
    <location>
        <begin position="68"/>
        <end position="146"/>
    </location>
</feature>
<feature type="region of interest" description="Flexible linker" evidence="1">
    <location>
        <begin position="147"/>
        <end position="158"/>
    </location>
</feature>
<feature type="region of interest" description="Domain III" evidence="1">
    <location>
        <begin position="159"/>
        <end position="215"/>
    </location>
</feature>
<dbReference type="EMBL" id="CT971583">
    <property type="protein sequence ID" value="CAK23496.1"/>
    <property type="molecule type" value="Genomic_DNA"/>
</dbReference>
<dbReference type="SMR" id="A5GKN1"/>
<dbReference type="STRING" id="32051.SynWH7803_1070"/>
<dbReference type="KEGG" id="syx:SynWH7803_1070"/>
<dbReference type="eggNOG" id="COG0632">
    <property type="taxonomic scope" value="Bacteria"/>
</dbReference>
<dbReference type="HOGENOM" id="CLU_087936_0_0_3"/>
<dbReference type="OrthoDB" id="5293449at2"/>
<dbReference type="Proteomes" id="UP000001566">
    <property type="component" value="Chromosome"/>
</dbReference>
<dbReference type="GO" id="GO:0005737">
    <property type="term" value="C:cytoplasm"/>
    <property type="evidence" value="ECO:0007669"/>
    <property type="project" value="UniProtKB-SubCell"/>
</dbReference>
<dbReference type="GO" id="GO:0009379">
    <property type="term" value="C:Holliday junction helicase complex"/>
    <property type="evidence" value="ECO:0007669"/>
    <property type="project" value="InterPro"/>
</dbReference>
<dbReference type="GO" id="GO:0048476">
    <property type="term" value="C:Holliday junction resolvase complex"/>
    <property type="evidence" value="ECO:0007669"/>
    <property type="project" value="UniProtKB-UniRule"/>
</dbReference>
<dbReference type="GO" id="GO:0005524">
    <property type="term" value="F:ATP binding"/>
    <property type="evidence" value="ECO:0007669"/>
    <property type="project" value="InterPro"/>
</dbReference>
<dbReference type="GO" id="GO:0000400">
    <property type="term" value="F:four-way junction DNA binding"/>
    <property type="evidence" value="ECO:0007669"/>
    <property type="project" value="UniProtKB-UniRule"/>
</dbReference>
<dbReference type="GO" id="GO:0009378">
    <property type="term" value="F:four-way junction helicase activity"/>
    <property type="evidence" value="ECO:0007669"/>
    <property type="project" value="InterPro"/>
</dbReference>
<dbReference type="GO" id="GO:0006310">
    <property type="term" value="P:DNA recombination"/>
    <property type="evidence" value="ECO:0007669"/>
    <property type="project" value="UniProtKB-UniRule"/>
</dbReference>
<dbReference type="GO" id="GO:0006281">
    <property type="term" value="P:DNA repair"/>
    <property type="evidence" value="ECO:0007669"/>
    <property type="project" value="UniProtKB-UniRule"/>
</dbReference>
<dbReference type="CDD" id="cd14332">
    <property type="entry name" value="UBA_RuvA_C"/>
    <property type="match status" value="1"/>
</dbReference>
<dbReference type="Gene3D" id="1.10.150.20">
    <property type="entry name" value="5' to 3' exonuclease, C-terminal subdomain"/>
    <property type="match status" value="1"/>
</dbReference>
<dbReference type="Gene3D" id="2.40.50.140">
    <property type="entry name" value="Nucleic acid-binding proteins"/>
    <property type="match status" value="1"/>
</dbReference>
<dbReference type="HAMAP" id="MF_00031">
    <property type="entry name" value="DNA_HJ_migration_RuvA"/>
    <property type="match status" value="1"/>
</dbReference>
<dbReference type="InterPro" id="IPR013849">
    <property type="entry name" value="DNA_helicase_Holl-junc_RuvA_I"/>
</dbReference>
<dbReference type="InterPro" id="IPR003583">
    <property type="entry name" value="Hlx-hairpin-Hlx_DNA-bd_motif"/>
</dbReference>
<dbReference type="InterPro" id="IPR012340">
    <property type="entry name" value="NA-bd_OB-fold"/>
</dbReference>
<dbReference type="InterPro" id="IPR000085">
    <property type="entry name" value="RuvA"/>
</dbReference>
<dbReference type="InterPro" id="IPR010994">
    <property type="entry name" value="RuvA_2-like"/>
</dbReference>
<dbReference type="InterPro" id="IPR011114">
    <property type="entry name" value="RuvA_C"/>
</dbReference>
<dbReference type="NCBIfam" id="TIGR00084">
    <property type="entry name" value="ruvA"/>
    <property type="match status" value="1"/>
</dbReference>
<dbReference type="Pfam" id="PF14520">
    <property type="entry name" value="HHH_5"/>
    <property type="match status" value="1"/>
</dbReference>
<dbReference type="Pfam" id="PF07499">
    <property type="entry name" value="RuvA_C"/>
    <property type="match status" value="1"/>
</dbReference>
<dbReference type="Pfam" id="PF01330">
    <property type="entry name" value="RuvA_N"/>
    <property type="match status" value="1"/>
</dbReference>
<dbReference type="SMART" id="SM00278">
    <property type="entry name" value="HhH1"/>
    <property type="match status" value="2"/>
</dbReference>
<dbReference type="SUPFAM" id="SSF50249">
    <property type="entry name" value="Nucleic acid-binding proteins"/>
    <property type="match status" value="1"/>
</dbReference>
<dbReference type="SUPFAM" id="SSF47781">
    <property type="entry name" value="RuvA domain 2-like"/>
    <property type="match status" value="1"/>
</dbReference>